<organism>
    <name type="scientific">Papio anubis</name>
    <name type="common">Olive baboon</name>
    <dbReference type="NCBI Taxonomy" id="9555"/>
    <lineage>
        <taxon>Eukaryota</taxon>
        <taxon>Metazoa</taxon>
        <taxon>Chordata</taxon>
        <taxon>Craniata</taxon>
        <taxon>Vertebrata</taxon>
        <taxon>Euteleostomi</taxon>
        <taxon>Mammalia</taxon>
        <taxon>Eutheria</taxon>
        <taxon>Euarchontoglires</taxon>
        <taxon>Primates</taxon>
        <taxon>Haplorrhini</taxon>
        <taxon>Catarrhini</taxon>
        <taxon>Cercopithecidae</taxon>
        <taxon>Cercopithecinae</taxon>
        <taxon>Papio</taxon>
    </lineage>
</organism>
<gene>
    <name evidence="1" type="primary">CFTR</name>
    <name type="synonym">ABCC7</name>
</gene>
<keyword id="KW-0067">ATP-binding</keyword>
<keyword id="KW-1003">Cell membrane</keyword>
<keyword id="KW-0868">Chloride</keyword>
<keyword id="KW-0869">Chloride channel</keyword>
<keyword id="KW-0256">Endoplasmic reticulum</keyword>
<keyword id="KW-0967">Endosome</keyword>
<keyword id="KW-0325">Glycoprotein</keyword>
<keyword id="KW-0407">Ion channel</keyword>
<keyword id="KW-0406">Ion transport</keyword>
<keyword id="KW-0413">Isomerase</keyword>
<keyword id="KW-1017">Isopeptide bond</keyword>
<keyword id="KW-0449">Lipoprotein</keyword>
<keyword id="KW-0472">Membrane</keyword>
<keyword id="KW-0547">Nucleotide-binding</keyword>
<keyword id="KW-0539">Nucleus</keyword>
<keyword id="KW-0564">Palmitate</keyword>
<keyword id="KW-0597">Phosphoprotein</keyword>
<keyword id="KW-1185">Reference proteome</keyword>
<keyword id="KW-0677">Repeat</keyword>
<keyword id="KW-0812">Transmembrane</keyword>
<keyword id="KW-1133">Transmembrane helix</keyword>
<keyword id="KW-0813">Transport</keyword>
<keyword id="KW-0832">Ubl conjugation</keyword>
<dbReference type="EC" id="5.6.1.6" evidence="1"/>
<dbReference type="EMBL" id="AF162427">
    <property type="protein sequence ID" value="AAD46907.1"/>
    <property type="molecule type" value="Genomic_DNA"/>
</dbReference>
<dbReference type="EMBL" id="AF162424">
    <property type="protein sequence ID" value="AAD46907.1"/>
    <property type="status" value="JOINED"/>
    <property type="molecule type" value="Genomic_DNA"/>
</dbReference>
<dbReference type="EMBL" id="AF162425">
    <property type="protein sequence ID" value="AAD46907.1"/>
    <property type="status" value="JOINED"/>
    <property type="molecule type" value="Genomic_DNA"/>
</dbReference>
<dbReference type="EMBL" id="AF162426">
    <property type="protein sequence ID" value="AAD46907.1"/>
    <property type="status" value="JOINED"/>
    <property type="molecule type" value="Genomic_DNA"/>
</dbReference>
<dbReference type="EMBL" id="AF162403">
    <property type="protein sequence ID" value="AAD46907.1"/>
    <property type="status" value="JOINED"/>
    <property type="molecule type" value="Genomic_DNA"/>
</dbReference>
<dbReference type="EMBL" id="AF162405">
    <property type="protein sequence ID" value="AAD46907.1"/>
    <property type="status" value="JOINED"/>
    <property type="molecule type" value="Genomic_DNA"/>
</dbReference>
<dbReference type="EMBL" id="AF162407">
    <property type="protein sequence ID" value="AAD46907.1"/>
    <property type="status" value="JOINED"/>
    <property type="molecule type" value="Genomic_DNA"/>
</dbReference>
<dbReference type="EMBL" id="AF162409">
    <property type="protein sequence ID" value="AAD46907.1"/>
    <property type="status" value="JOINED"/>
    <property type="molecule type" value="Genomic_DNA"/>
</dbReference>
<dbReference type="EMBL" id="AF162411">
    <property type="protein sequence ID" value="AAD46907.1"/>
    <property type="status" value="JOINED"/>
    <property type="molecule type" value="Genomic_DNA"/>
</dbReference>
<dbReference type="EMBL" id="AF162420">
    <property type="protein sequence ID" value="AAD46907.1"/>
    <property type="status" value="JOINED"/>
    <property type="molecule type" value="Genomic_DNA"/>
</dbReference>
<dbReference type="EMBL" id="AF162419">
    <property type="protein sequence ID" value="AAD46907.1"/>
    <property type="status" value="JOINED"/>
    <property type="molecule type" value="Genomic_DNA"/>
</dbReference>
<dbReference type="EMBL" id="AF162418">
    <property type="protein sequence ID" value="AAD46907.1"/>
    <property type="status" value="JOINED"/>
    <property type="molecule type" value="Genomic_DNA"/>
</dbReference>
<dbReference type="EMBL" id="AF162417">
    <property type="protein sequence ID" value="AAD46907.1"/>
    <property type="status" value="JOINED"/>
    <property type="molecule type" value="Genomic_DNA"/>
</dbReference>
<dbReference type="EMBL" id="AF162416">
    <property type="protein sequence ID" value="AAD46907.1"/>
    <property type="status" value="JOINED"/>
    <property type="molecule type" value="Genomic_DNA"/>
</dbReference>
<dbReference type="EMBL" id="AF162415">
    <property type="protein sequence ID" value="AAD46907.1"/>
    <property type="status" value="JOINED"/>
    <property type="molecule type" value="Genomic_DNA"/>
</dbReference>
<dbReference type="EMBL" id="AF162414">
    <property type="protein sequence ID" value="AAD46907.1"/>
    <property type="status" value="JOINED"/>
    <property type="molecule type" value="Genomic_DNA"/>
</dbReference>
<dbReference type="EMBL" id="AF162413">
    <property type="protein sequence ID" value="AAD46907.1"/>
    <property type="status" value="JOINED"/>
    <property type="molecule type" value="Genomic_DNA"/>
</dbReference>
<dbReference type="EMBL" id="AF162412">
    <property type="protein sequence ID" value="AAD46907.1"/>
    <property type="status" value="JOINED"/>
    <property type="molecule type" value="Genomic_DNA"/>
</dbReference>
<dbReference type="EMBL" id="AF162423">
    <property type="protein sequence ID" value="AAD46907.1"/>
    <property type="status" value="JOINED"/>
    <property type="molecule type" value="Genomic_DNA"/>
</dbReference>
<dbReference type="EMBL" id="AF162422">
    <property type="protein sequence ID" value="AAD46907.1"/>
    <property type="status" value="JOINED"/>
    <property type="molecule type" value="Genomic_DNA"/>
</dbReference>
<dbReference type="EMBL" id="AF162421">
    <property type="protein sequence ID" value="AAD46907.1"/>
    <property type="status" value="JOINED"/>
    <property type="molecule type" value="Genomic_DNA"/>
</dbReference>
<dbReference type="EMBL" id="AF162410">
    <property type="protein sequence ID" value="AAD46907.1"/>
    <property type="status" value="JOINED"/>
    <property type="molecule type" value="Genomic_DNA"/>
</dbReference>
<dbReference type="EMBL" id="AF162408">
    <property type="protein sequence ID" value="AAD46907.1"/>
    <property type="status" value="JOINED"/>
    <property type="molecule type" value="Genomic_DNA"/>
</dbReference>
<dbReference type="EMBL" id="AF162406">
    <property type="protein sequence ID" value="AAD46907.1"/>
    <property type="status" value="JOINED"/>
    <property type="molecule type" value="Genomic_DNA"/>
</dbReference>
<dbReference type="EMBL" id="AF162404">
    <property type="protein sequence ID" value="AAD46907.1"/>
    <property type="status" value="JOINED"/>
    <property type="molecule type" value="Genomic_DNA"/>
</dbReference>
<dbReference type="EMBL" id="AF162402">
    <property type="protein sequence ID" value="AAD46907.1"/>
    <property type="status" value="JOINED"/>
    <property type="molecule type" value="Genomic_DNA"/>
</dbReference>
<dbReference type="EMBL" id="AF162401">
    <property type="protein sequence ID" value="AAD46907.1"/>
    <property type="status" value="JOINED"/>
    <property type="molecule type" value="Genomic_DNA"/>
</dbReference>
<dbReference type="SMR" id="Q9TSP5"/>
<dbReference type="STRING" id="9555.ENSPANP00000006540"/>
<dbReference type="GlyCosmos" id="Q9TSP5">
    <property type="glycosylation" value="2 sites, No reported glycans"/>
</dbReference>
<dbReference type="eggNOG" id="KOG0054">
    <property type="taxonomic scope" value="Eukaryota"/>
</dbReference>
<dbReference type="Proteomes" id="UP000028761">
    <property type="component" value="Unplaced"/>
</dbReference>
<dbReference type="GO" id="GO:0016324">
    <property type="term" value="C:apical plasma membrane"/>
    <property type="evidence" value="ECO:0000250"/>
    <property type="project" value="UniProtKB"/>
</dbReference>
<dbReference type="GO" id="GO:0034707">
    <property type="term" value="C:chloride channel complex"/>
    <property type="evidence" value="ECO:0007669"/>
    <property type="project" value="UniProtKB-KW"/>
</dbReference>
<dbReference type="GO" id="GO:0005829">
    <property type="term" value="C:cytosol"/>
    <property type="evidence" value="ECO:0007669"/>
    <property type="project" value="TreeGrafter"/>
</dbReference>
<dbReference type="GO" id="GO:0005769">
    <property type="term" value="C:early endosome"/>
    <property type="evidence" value="ECO:0000250"/>
    <property type="project" value="UniProtKB"/>
</dbReference>
<dbReference type="GO" id="GO:0031901">
    <property type="term" value="C:early endosome membrane"/>
    <property type="evidence" value="ECO:0007669"/>
    <property type="project" value="UniProtKB-SubCell"/>
</dbReference>
<dbReference type="GO" id="GO:0005789">
    <property type="term" value="C:endoplasmic reticulum membrane"/>
    <property type="evidence" value="ECO:0000250"/>
    <property type="project" value="UniProtKB"/>
</dbReference>
<dbReference type="GO" id="GO:0016020">
    <property type="term" value="C:membrane"/>
    <property type="evidence" value="ECO:0000250"/>
    <property type="project" value="UniProtKB"/>
</dbReference>
<dbReference type="GO" id="GO:0005634">
    <property type="term" value="C:nucleus"/>
    <property type="evidence" value="ECO:0000250"/>
    <property type="project" value="UniProtKB"/>
</dbReference>
<dbReference type="GO" id="GO:0005886">
    <property type="term" value="C:plasma membrane"/>
    <property type="evidence" value="ECO:0000250"/>
    <property type="project" value="UniProtKB"/>
</dbReference>
<dbReference type="GO" id="GO:0055038">
    <property type="term" value="C:recycling endosome membrane"/>
    <property type="evidence" value="ECO:0007669"/>
    <property type="project" value="UniProtKB-SubCell"/>
</dbReference>
<dbReference type="GO" id="GO:0140359">
    <property type="term" value="F:ABC-type transporter activity"/>
    <property type="evidence" value="ECO:0007669"/>
    <property type="project" value="InterPro"/>
</dbReference>
<dbReference type="GO" id="GO:0005524">
    <property type="term" value="F:ATP binding"/>
    <property type="evidence" value="ECO:0007669"/>
    <property type="project" value="UniProtKB-KW"/>
</dbReference>
<dbReference type="GO" id="GO:0016887">
    <property type="term" value="F:ATP hydrolysis activity"/>
    <property type="evidence" value="ECO:0000250"/>
    <property type="project" value="UniProtKB"/>
</dbReference>
<dbReference type="GO" id="GO:0015106">
    <property type="term" value="F:bicarbonate transmembrane transporter activity"/>
    <property type="evidence" value="ECO:0000250"/>
    <property type="project" value="UniProtKB"/>
</dbReference>
<dbReference type="GO" id="GO:0005254">
    <property type="term" value="F:chloride channel activity"/>
    <property type="evidence" value="ECO:0000250"/>
    <property type="project" value="UniProtKB"/>
</dbReference>
<dbReference type="GO" id="GO:0019869">
    <property type="term" value="F:chloride channel inhibitor activity"/>
    <property type="evidence" value="ECO:0000250"/>
    <property type="project" value="UniProtKB"/>
</dbReference>
<dbReference type="GO" id="GO:0015108">
    <property type="term" value="F:chloride transmembrane transporter activity"/>
    <property type="evidence" value="ECO:0000250"/>
    <property type="project" value="UniProtKB"/>
</dbReference>
<dbReference type="GO" id="GO:0005260">
    <property type="term" value="F:intracellularly ATP-gated chloride channel activity"/>
    <property type="evidence" value="ECO:0000250"/>
    <property type="project" value="UniProtKB"/>
</dbReference>
<dbReference type="GO" id="GO:0015701">
    <property type="term" value="P:bicarbonate transport"/>
    <property type="evidence" value="ECO:0000250"/>
    <property type="project" value="UniProtKB"/>
</dbReference>
<dbReference type="GO" id="GO:0071320">
    <property type="term" value="P:cellular response to cAMP"/>
    <property type="evidence" value="ECO:0000250"/>
    <property type="project" value="UniProtKB"/>
</dbReference>
<dbReference type="GO" id="GO:1904322">
    <property type="term" value="P:cellular response to forskolin"/>
    <property type="evidence" value="ECO:0000250"/>
    <property type="project" value="UniProtKB"/>
</dbReference>
<dbReference type="GO" id="GO:1902476">
    <property type="term" value="P:chloride transmembrane transport"/>
    <property type="evidence" value="ECO:0000250"/>
    <property type="project" value="UniProtKB"/>
</dbReference>
<dbReference type="GO" id="GO:0051454">
    <property type="term" value="P:intracellular pH elevation"/>
    <property type="evidence" value="ECO:0000250"/>
    <property type="project" value="UniProtKB"/>
</dbReference>
<dbReference type="GO" id="GO:0060081">
    <property type="term" value="P:membrane hyperpolarization"/>
    <property type="evidence" value="ECO:0000250"/>
    <property type="project" value="UniProtKB"/>
</dbReference>
<dbReference type="GO" id="GO:0050891">
    <property type="term" value="P:multicellular organismal-level water homeostasis"/>
    <property type="evidence" value="ECO:0000250"/>
    <property type="project" value="UniProtKB"/>
</dbReference>
<dbReference type="GO" id="GO:0034976">
    <property type="term" value="P:response to endoplasmic reticulum stress"/>
    <property type="evidence" value="ECO:0000250"/>
    <property type="project" value="UniProtKB"/>
</dbReference>
<dbReference type="GO" id="GO:0048240">
    <property type="term" value="P:sperm capacitation"/>
    <property type="evidence" value="ECO:0000250"/>
    <property type="project" value="UniProtKB"/>
</dbReference>
<dbReference type="GO" id="GO:0035377">
    <property type="term" value="P:transepithelial water transport"/>
    <property type="evidence" value="ECO:0000250"/>
    <property type="project" value="UniProtKB"/>
</dbReference>
<dbReference type="CDD" id="cd18594">
    <property type="entry name" value="ABC_6TM_CFTR_D1"/>
    <property type="match status" value="1"/>
</dbReference>
<dbReference type="CDD" id="cd18600">
    <property type="entry name" value="ABC_6TM_CFTR_D2"/>
    <property type="match status" value="1"/>
</dbReference>
<dbReference type="CDD" id="cd03291">
    <property type="entry name" value="ABCC_CFTR1"/>
    <property type="match status" value="1"/>
</dbReference>
<dbReference type="CDD" id="cd03289">
    <property type="entry name" value="ABCC_CFTR2"/>
    <property type="match status" value="1"/>
</dbReference>
<dbReference type="FunFam" id="1.20.1560.10:FF:000017">
    <property type="entry name" value="Cystic fibrosis transmembrane conductance regulator"/>
    <property type="match status" value="1"/>
</dbReference>
<dbReference type="FunFam" id="1.20.1560.10:FF:000019">
    <property type="entry name" value="Cystic fibrosis transmembrane conductance regulator"/>
    <property type="match status" value="1"/>
</dbReference>
<dbReference type="FunFam" id="3.40.50.300:FF:000581">
    <property type="entry name" value="Cystic fibrosis transmembrane conductance regulator"/>
    <property type="match status" value="1"/>
</dbReference>
<dbReference type="FunFam" id="3.40.50.300:FF:000591">
    <property type="entry name" value="Cystic fibrosis transmembrane conductance regulator"/>
    <property type="match status" value="1"/>
</dbReference>
<dbReference type="Gene3D" id="1.20.1560.10">
    <property type="entry name" value="ABC transporter type 1, transmembrane domain"/>
    <property type="match status" value="2"/>
</dbReference>
<dbReference type="Gene3D" id="3.40.50.300">
    <property type="entry name" value="P-loop containing nucleotide triphosphate hydrolases"/>
    <property type="match status" value="2"/>
</dbReference>
<dbReference type="InterPro" id="IPR003593">
    <property type="entry name" value="AAA+_ATPase"/>
</dbReference>
<dbReference type="InterPro" id="IPR011527">
    <property type="entry name" value="ABC1_TM_dom"/>
</dbReference>
<dbReference type="InterPro" id="IPR036640">
    <property type="entry name" value="ABC1_TM_sf"/>
</dbReference>
<dbReference type="InterPro" id="IPR003439">
    <property type="entry name" value="ABC_transporter-like_ATP-bd"/>
</dbReference>
<dbReference type="InterPro" id="IPR017871">
    <property type="entry name" value="ABC_transporter-like_CS"/>
</dbReference>
<dbReference type="InterPro" id="IPR050173">
    <property type="entry name" value="ABC_transporter_C-like"/>
</dbReference>
<dbReference type="InterPro" id="IPR009147">
    <property type="entry name" value="CFTR/ABCC7"/>
</dbReference>
<dbReference type="InterPro" id="IPR047082">
    <property type="entry name" value="CFTR1_ATP-bd_dom1"/>
</dbReference>
<dbReference type="InterPro" id="IPR025837">
    <property type="entry name" value="CFTR_reg_dom"/>
</dbReference>
<dbReference type="InterPro" id="IPR027417">
    <property type="entry name" value="P-loop_NTPase"/>
</dbReference>
<dbReference type="NCBIfam" id="TIGR01271">
    <property type="entry name" value="CFTR_protein"/>
    <property type="match status" value="1"/>
</dbReference>
<dbReference type="PANTHER" id="PTHR24223">
    <property type="entry name" value="ATP-BINDING CASSETTE SUB-FAMILY C"/>
    <property type="match status" value="1"/>
</dbReference>
<dbReference type="PANTHER" id="PTHR24223:SF19">
    <property type="entry name" value="CYSTIC FIBROSIS TRANSMEMBRANE CONDUCTANCE REGULATOR"/>
    <property type="match status" value="1"/>
</dbReference>
<dbReference type="Pfam" id="PF00664">
    <property type="entry name" value="ABC_membrane"/>
    <property type="match status" value="2"/>
</dbReference>
<dbReference type="Pfam" id="PF00005">
    <property type="entry name" value="ABC_tran"/>
    <property type="match status" value="2"/>
</dbReference>
<dbReference type="Pfam" id="PF14396">
    <property type="entry name" value="CFTR_R"/>
    <property type="match status" value="1"/>
</dbReference>
<dbReference type="PRINTS" id="PR01851">
    <property type="entry name" value="CYSFIBREGLTR"/>
</dbReference>
<dbReference type="SMART" id="SM00382">
    <property type="entry name" value="AAA"/>
    <property type="match status" value="2"/>
</dbReference>
<dbReference type="SUPFAM" id="SSF90123">
    <property type="entry name" value="ABC transporter transmembrane region"/>
    <property type="match status" value="2"/>
</dbReference>
<dbReference type="SUPFAM" id="SSF52540">
    <property type="entry name" value="P-loop containing nucleoside triphosphate hydrolases"/>
    <property type="match status" value="2"/>
</dbReference>
<dbReference type="PROSITE" id="PS50929">
    <property type="entry name" value="ABC_TM1F"/>
    <property type="match status" value="2"/>
</dbReference>
<dbReference type="PROSITE" id="PS00211">
    <property type="entry name" value="ABC_TRANSPORTER_1"/>
    <property type="match status" value="1"/>
</dbReference>
<dbReference type="PROSITE" id="PS50893">
    <property type="entry name" value="ABC_TRANSPORTER_2"/>
    <property type="match status" value="2"/>
</dbReference>
<protein>
    <recommendedName>
        <fullName evidence="1">Cystic fibrosis transmembrane conductance regulator</fullName>
        <shortName>CFTR</shortName>
    </recommendedName>
    <alternativeName>
        <fullName>ATP-binding cassette sub-family C member 7</fullName>
    </alternativeName>
    <alternativeName>
        <fullName>Channel conductance-controlling ATPase</fullName>
        <ecNumber evidence="1">5.6.1.6</ecNumber>
    </alternativeName>
    <alternativeName>
        <fullName>cAMP-dependent chloride channel</fullName>
    </alternativeName>
</protein>
<proteinExistence type="inferred from homology"/>
<sequence length="1481" mass="168475">MQRSPLEKASVVSKLFFSWTRPILRKGYRQRLELSDIYQIPSADSADNLSEKLEREWDRELASKKNPKLINALRRCFFWRFMFYGILLYLGEVTKAVQPLLLGRIIASYDPDNKEERSIAIYLGIGLCLLFIVRTLLLHPAIFGLHHIGMQMRIAMFSLIYKKTLKLSSRVLDKISIGQLVSLLSNNLNKFDEGLALAHFVWIVPLQVALLMGLIWELLQASAFCGLGFLIVLALFQAGLGRMMMKYRDQRAGKINERLVITSEMIENIQSVKAYCWEEAMEKMIENLRQTELKLTRKAAYVRYFNSSAFFFSGFFVVFLSVLPYALIKGIVLRKIFTTISFCIVLRMAVTRQFPWAVQTWYDSLGAINKIQDFLQKQEYKTLEYNLTTTEVVMENVTAFWEEGFGELFEKAKQNNSNRKTSNDDDSLFFSNFSLLGTPVLKDINFKIERGQLLAVAGSTGAGKTSLLMMIMGELEPSEGKIKHSGRISFCSQFSWIMPGTIKENIIFGVSYDEYRYRSVINACQLEEDISKFAEKDNIVLGEGGITLSGGQRARISLARAVYKDADLYLLDSPFGYLDVLTEKEIFESCVCKLMANKTRILVTSKMEHLKKADKILILHEGSSYFYGTFSELQNLRPDFSSKLMGYDSFDQFSAERRNSILTETLRRFSLEGDAPVSWTETKKQSFKQTGEFGEKRKNSILNPINSIRKFSIVQKTPLQMNGIEEDSDEPLERRLSLVPDSEQGEVILPRISVISTGPTLQARRRQSVLNLMTHSVNQGQSIHRKTAASTRKVSLAPQANLTELDIYSRRLSQETGLEISEEINEEDLKECFFDDMESIPAVTTWNTYLRYITVHKSLIFVLIWCLVIFLAEVAASLVVLWFLGNTPPQDKGNSTYSRNNSYAVIITRTSSYYVFYIYVGVADTLLAMGFFRGLPLVHTLITVSKILHHKMLHSVLQAPMSTLNTLKAGGILNRFSKDIAILDDLLPLTIFDFIQLLLIVIGAIAVVAVLQPYIFVATVPVIVAFIMLRAYFLQTSQQLKQLESEGRSPIFTHLVTSLKGLWTLRAFGRQPYFETLFHKALNLHTANWFLYLSTLRWFQMRIEMIFVIFFIAVTFISILTTGEGEGTVGIILTLAMNIMSTLQWAVNSSIDVDSLMRSVSRVFKFIDMPTEEGKPTRSTKPYKNGQLSKVMVIENSHVKKDDIWPSGGQMTVKDLTAKYTEGGNPILENISFSISPGQRVGLLGRTGSGKSTLLSAFLRLLNTEGEIQIDGVSWDSITLQQWRKAFGVIPQKVFIFSGTFRKNLDPYEQWSDQEIWKVADEVGLRSVIEQFPGKLDFVLVDGGCVLSHGHKQLMCLARSVLSKAKILLLDEPSAHLDPVTYQIIRRTLKQAFADCTVILCEHRIEAMLECQQFLVIEENKVRQYDSIQKLLNERSLFRQAISPSDRVKLFPHRNSSKCKSQPQIAALKEETEEEVQDTRL</sequence>
<name>CFTR_PAPAN</name>
<evidence type="ECO:0000250" key="1">
    <source>
        <dbReference type="UniProtKB" id="P13569"/>
    </source>
</evidence>
<evidence type="ECO:0000250" key="2">
    <source>
        <dbReference type="UniProtKB" id="P26361"/>
    </source>
</evidence>
<evidence type="ECO:0000250" key="3">
    <source>
        <dbReference type="UniProtKB" id="P34158"/>
    </source>
</evidence>
<evidence type="ECO:0000255" key="4"/>
<evidence type="ECO:0000255" key="5">
    <source>
        <dbReference type="PROSITE-ProRule" id="PRU00434"/>
    </source>
</evidence>
<evidence type="ECO:0000255" key="6">
    <source>
        <dbReference type="PROSITE-ProRule" id="PRU00441"/>
    </source>
</evidence>
<evidence type="ECO:0000256" key="7">
    <source>
        <dbReference type="SAM" id="MobiDB-lite"/>
    </source>
</evidence>
<evidence type="ECO:0000305" key="8"/>
<reference key="1">
    <citation type="submission" date="1999-06" db="EMBL/GenBank/DDBJ databases">
        <title>CFTR genomic sequences from five primate species.</title>
        <authorList>
            <person name="Wine J.J."/>
            <person name="Kuo E."/>
            <person name="Hurlock G."/>
            <person name="Glavac D."/>
            <person name="Dean M."/>
        </authorList>
    </citation>
    <scope>NUCLEOTIDE SEQUENCE [GENOMIC DNA]</scope>
</reference>
<feature type="chain" id="PRO_0000093425" description="Cystic fibrosis transmembrane conductance regulator">
    <location>
        <begin position="1"/>
        <end position="1481"/>
    </location>
</feature>
<feature type="topological domain" description="Cytoplasmic" evidence="1">
    <location>
        <begin position="1"/>
        <end position="77"/>
    </location>
</feature>
<feature type="transmembrane region" description="Helical; Name=1" evidence="1">
    <location>
        <begin position="78"/>
        <end position="98"/>
    </location>
</feature>
<feature type="topological domain" description="Extracellular" evidence="1">
    <location>
        <begin position="99"/>
        <end position="122"/>
    </location>
</feature>
<feature type="transmembrane region" description="Helical; Name=2" evidence="1">
    <location>
        <begin position="123"/>
        <end position="146"/>
    </location>
</feature>
<feature type="topological domain" description="Cytoplasmic" evidence="1">
    <location>
        <begin position="147"/>
        <end position="195"/>
    </location>
</feature>
<feature type="transmembrane region" description="Helical; Name=3" evidence="1">
    <location>
        <begin position="196"/>
        <end position="216"/>
    </location>
</feature>
<feature type="topological domain" description="Extracellular" evidence="1">
    <location>
        <begin position="217"/>
        <end position="222"/>
    </location>
</feature>
<feature type="transmembrane region" description="Helical; Name=4" evidence="1">
    <location>
        <begin position="223"/>
        <end position="243"/>
    </location>
</feature>
<feature type="topological domain" description="Cytoplasmic" evidence="1">
    <location>
        <begin position="244"/>
        <end position="298"/>
    </location>
</feature>
<feature type="transmembrane region" description="Helical; Name=5" evidence="1">
    <location>
        <begin position="299"/>
        <end position="319"/>
    </location>
</feature>
<feature type="topological domain" description="Extracellular" evidence="1">
    <location>
        <begin position="320"/>
        <end position="339"/>
    </location>
</feature>
<feature type="transmembrane region" description="Helical; Name=6" evidence="1">
    <location>
        <begin position="340"/>
        <end position="358"/>
    </location>
</feature>
<feature type="topological domain" description="Cytoplasmic" evidence="1">
    <location>
        <begin position="359"/>
        <end position="858"/>
    </location>
</feature>
<feature type="transmembrane region" description="Helical; Name=7" evidence="1">
    <location>
        <begin position="859"/>
        <end position="879"/>
    </location>
</feature>
<feature type="topological domain" description="Extracellular" evidence="1">
    <location>
        <begin position="880"/>
        <end position="918"/>
    </location>
</feature>
<feature type="transmembrane region" description="Discontinuously helical; Name=8" evidence="1">
    <location>
        <begin position="919"/>
        <end position="939"/>
    </location>
</feature>
<feature type="topological domain" description="Cytoplasmic" evidence="1">
    <location>
        <begin position="940"/>
        <end position="990"/>
    </location>
</feature>
<feature type="transmembrane region" description="Helical; Name=9" evidence="1">
    <location>
        <begin position="991"/>
        <end position="1011"/>
    </location>
</feature>
<feature type="topological domain" description="Extracellular" evidence="1">
    <location>
        <begin position="1012"/>
        <end position="1013"/>
    </location>
</feature>
<feature type="transmembrane region" description="Helical; Name=10" evidence="1">
    <location>
        <begin position="1014"/>
        <end position="1034"/>
    </location>
</feature>
<feature type="topological domain" description="Cytoplasmic" evidence="1">
    <location>
        <begin position="1035"/>
        <end position="1095"/>
    </location>
</feature>
<feature type="transmembrane region" description="Helical; Name=11" evidence="1">
    <location>
        <begin position="1096"/>
        <end position="1116"/>
    </location>
</feature>
<feature type="topological domain" description="Extracellular" evidence="1">
    <location>
        <begin position="1117"/>
        <end position="1130"/>
    </location>
</feature>
<feature type="transmembrane region" description="Helical; Name=12" evidence="1">
    <location>
        <begin position="1131"/>
        <end position="1151"/>
    </location>
</feature>
<feature type="topological domain" description="Cytoplasmic" evidence="1">
    <location>
        <begin position="1152"/>
        <end position="1481"/>
    </location>
</feature>
<feature type="domain" description="ABC transmembrane type-1 1" evidence="6">
    <location>
        <begin position="81"/>
        <end position="365"/>
    </location>
</feature>
<feature type="domain" description="ABC transporter 1" evidence="5">
    <location>
        <begin position="423"/>
        <end position="646"/>
    </location>
</feature>
<feature type="domain" description="ABC transmembrane type-1 2" evidence="6">
    <location>
        <begin position="859"/>
        <end position="1155"/>
    </location>
</feature>
<feature type="domain" description="ABC transporter 2" evidence="5">
    <location>
        <begin position="1211"/>
        <end position="1444"/>
    </location>
</feature>
<feature type="region of interest" description="Disordered R region" evidence="1">
    <location>
        <begin position="654"/>
        <end position="831"/>
    </location>
</feature>
<feature type="region of interest" description="Interaction with GORASP2" evidence="1">
    <location>
        <begin position="1387"/>
        <end position="1481"/>
    </location>
</feature>
<feature type="region of interest" description="Disordered" evidence="7">
    <location>
        <begin position="1462"/>
        <end position="1481"/>
    </location>
</feature>
<feature type="short sequence motif" description="PDZ-binding" evidence="1">
    <location>
        <begin position="1479"/>
        <end position="1481"/>
    </location>
</feature>
<feature type="compositionally biased region" description="Acidic residues" evidence="7">
    <location>
        <begin position="1471"/>
        <end position="1481"/>
    </location>
</feature>
<feature type="binding site" evidence="1">
    <location>
        <position position="401"/>
    </location>
    <ligand>
        <name>ATP</name>
        <dbReference type="ChEBI" id="CHEBI:30616"/>
        <label>1</label>
    </ligand>
</feature>
<feature type="binding site" evidence="1">
    <location>
        <position position="434"/>
    </location>
    <ligand>
        <name>ATP</name>
        <dbReference type="ChEBI" id="CHEBI:30616"/>
        <label>1</label>
    </ligand>
</feature>
<feature type="binding site" evidence="5">
    <location>
        <begin position="458"/>
        <end position="465"/>
    </location>
    <ligand>
        <name>ATP</name>
        <dbReference type="ChEBI" id="CHEBI:30616"/>
        <label>1</label>
    </ligand>
</feature>
<feature type="binding site" evidence="2">
    <location>
        <position position="493"/>
    </location>
    <ligand>
        <name>ATP</name>
        <dbReference type="ChEBI" id="CHEBI:30616"/>
        <label>1</label>
    </ligand>
</feature>
<feature type="binding site" evidence="1">
    <location>
        <position position="1220"/>
    </location>
    <ligand>
        <name>ATP</name>
        <dbReference type="ChEBI" id="CHEBI:30616"/>
        <label>2</label>
    </ligand>
</feature>
<feature type="binding site" evidence="5">
    <location>
        <begin position="1245"/>
        <end position="1252"/>
    </location>
    <ligand>
        <name>ATP</name>
        <dbReference type="ChEBI" id="CHEBI:30616"/>
        <label>2</label>
    </ligand>
</feature>
<feature type="modified residue" description="Phosphoserine" evidence="1">
    <location>
        <position position="549"/>
    </location>
</feature>
<feature type="modified residue" description="Phosphoserine" evidence="1">
    <location>
        <position position="660"/>
    </location>
</feature>
<feature type="modified residue" description="Phosphoserine; by PKA" evidence="1">
    <location>
        <position position="670"/>
    </location>
</feature>
<feature type="modified residue" description="Phosphoserine" evidence="1">
    <location>
        <position position="686"/>
    </location>
</feature>
<feature type="modified residue" description="Phosphoserine" evidence="1">
    <location>
        <position position="700"/>
    </location>
</feature>
<feature type="modified residue" description="Phosphoserine" evidence="1">
    <location>
        <position position="712"/>
    </location>
</feature>
<feature type="modified residue" description="Phosphothreonine" evidence="1">
    <location>
        <position position="717"/>
    </location>
</feature>
<feature type="modified residue" description="Phosphoserine" evidence="1">
    <location>
        <position position="737"/>
    </location>
</feature>
<feature type="modified residue" description="Phosphoserine" evidence="1">
    <location>
        <position position="753"/>
    </location>
</feature>
<feature type="modified residue" description="Phosphoserine" evidence="1">
    <location>
        <position position="768"/>
    </location>
</feature>
<feature type="modified residue" description="Phosphoserine" evidence="1">
    <location>
        <position position="790"/>
    </location>
</feature>
<feature type="modified residue" description="Phosphoserine" evidence="1">
    <location>
        <position position="795"/>
    </location>
</feature>
<feature type="modified residue" description="Phosphoserine" evidence="1">
    <location>
        <position position="813"/>
    </location>
</feature>
<feature type="modified residue" description="Phosphoserine" evidence="1">
    <location>
        <position position="1445"/>
    </location>
</feature>
<feature type="modified residue" description="Phosphoserine" evidence="1">
    <location>
        <position position="1457"/>
    </location>
</feature>
<feature type="lipid moiety-binding region" description="S-palmitoyl cysteine" evidence="1">
    <location>
        <position position="524"/>
    </location>
</feature>
<feature type="lipid moiety-binding region" description="S-palmitoyl cysteine" evidence="1">
    <location>
        <position position="1396"/>
    </location>
</feature>
<feature type="glycosylation site" description="N-linked (GlcNAc...) asparagine" evidence="4">
    <location>
        <position position="894"/>
    </location>
</feature>
<feature type="glycosylation site" description="N-linked (GlcNAc...) asparagine" evidence="4">
    <location>
        <position position="900"/>
    </location>
</feature>
<feature type="cross-link" description="Glycyl lysine isopeptide (Lys-Gly) (interchain with G-Cter in ubiquitin)" evidence="1">
    <location>
        <position position="688"/>
    </location>
</feature>
<comment type="function">
    <text evidence="1 2">Epithelial ion channel that plays an important role in the regulation of epithelial ion and water transport and fluid homeostasis. Mediates the transport of chloride ions across the cell membrane (By similarity). Possesses an intrinsic ATPase activity and utilizes ATP to gate its channel; the passive flow of anions through the channel is gated by cycles of ATP binding and hydrolysis by the ATP-binding domains (By similarity). The ion channel is also permeable to HCO(3)(-); selectivity depends on the extracellular chloride concentration. Exerts its function also by modulating the activity of other ion channels and transporters. Contributes to the regulation of the pH and the ion content of the epithelial fluid layer. Modulates the activity of the epithelial sodium channel (ENaC) complex, in part by regulating the cell surface expression of the ENaC complex. May regulate bicarbonate secretion and salvage in epithelial cells by regulating the transporter SLC4A7. Can inhibit the chloride channel activity of ANO1 (By similarity). Plays a role in the chloride and bicarbonate homeostasis during sperm epididymal maturation and capacitation (By similarity).</text>
</comment>
<comment type="catalytic activity">
    <reaction evidence="1">
        <text>ATP + H2O + closed Cl(-) channel = ADP + phosphate + open Cl(-) channel.</text>
        <dbReference type="EC" id="5.6.1.6"/>
    </reaction>
</comment>
<comment type="catalytic activity">
    <reaction evidence="1">
        <text>chloride(in) = chloride(out)</text>
        <dbReference type="Rhea" id="RHEA:29823"/>
        <dbReference type="ChEBI" id="CHEBI:17996"/>
    </reaction>
</comment>
<comment type="catalytic activity">
    <reaction evidence="1">
        <text>hydrogencarbonate(in) = hydrogencarbonate(out)</text>
        <dbReference type="Rhea" id="RHEA:28695"/>
        <dbReference type="ChEBI" id="CHEBI:17544"/>
    </reaction>
</comment>
<comment type="catalytic activity">
    <reaction evidence="1">
        <text>ATP + H2O = ADP + phosphate + H(+)</text>
        <dbReference type="Rhea" id="RHEA:13065"/>
        <dbReference type="ChEBI" id="CHEBI:15377"/>
        <dbReference type="ChEBI" id="CHEBI:15378"/>
        <dbReference type="ChEBI" id="CHEBI:30616"/>
        <dbReference type="ChEBI" id="CHEBI:43474"/>
        <dbReference type="ChEBI" id="CHEBI:456216"/>
    </reaction>
    <physiologicalReaction direction="left-to-right" evidence="1">
        <dbReference type="Rhea" id="RHEA:13066"/>
    </physiologicalReaction>
</comment>
<comment type="subunit">
    <text evidence="1 2 3">Monomer; does not require oligomerization for channel activity. May form oligomers in the membrane (By similarity). Interacts with SLC26A3, SLC26A6 and NHERF1 (By similarity). Interacts with SHANK2 (By similarity). Interacts with MYO6 (By similarity). Interacts (via C-terminus) with GOPC (via PDZ domain); this promotes CFTR internalization and thereby decreases channel activity. Interacts with SLC4A7 through NHERF1. Found in a complex with MYO5B and RAB11A. Interacts with ANO1. Interacts with SLC26A8 (By similarity). Interacts with AHCYL1; the interaction increases CFTR activity (By similarity). Interacts with CSE1L (By similarity). The core-glycosylated form interacts with GORASP2 (via PDZ GRASP-type 1 domain) in respone to ER stress (By similarity). Interacts with MARCHF2; the interaction leads to CFTR ubiqtuitination and degradation (By similarity). Interacts with ADGRG2 (By similarity).</text>
</comment>
<comment type="subcellular location">
    <subcellularLocation>
        <location evidence="2">Apical cell membrane</location>
        <topology evidence="1">Multi-pass membrane protein</topology>
    </subcellularLocation>
    <subcellularLocation>
        <location evidence="1">Early endosome membrane</location>
        <topology evidence="1">Multi-pass membrane protein</topology>
    </subcellularLocation>
    <subcellularLocation>
        <location evidence="2">Cell membrane</location>
        <topology evidence="1">Multi-pass membrane protein</topology>
    </subcellularLocation>
    <subcellularLocation>
        <location evidence="1">Recycling endosome membrane</location>
        <topology evidence="1">Multi-pass membrane protein</topology>
    </subcellularLocation>
    <subcellularLocation>
        <location evidence="1">Endoplasmic reticulum membrane</location>
        <topology evidence="1">Multi-pass membrane protein</topology>
    </subcellularLocation>
    <subcellularLocation>
        <location evidence="3">Nucleus</location>
    </subcellularLocation>
    <text evidence="1 3">The channel is internalized from the cell surface into an endosomal recycling compartment, from where it is recycled to the cell membrane. In the oviduct and bronchus, detected on the apical side of epithelial cells, but not associated with cilia. In Sertoli cells, a processed product is detected in the nucleus. ER stress induces GORASP2-mediated unconventional (ER/Golgi-independent) trafficking of core-glycosylated CFTR to cell membrane.</text>
</comment>
<comment type="domain">
    <text evidence="1 2">Binds and hydrolyzes ATP via the two cytoplasmic ABC transporter nucleotide-binding domains. The two ATP-binding domains interact with each other, forming a head-to-tail dimer. Normal ATPase activity requires interaction between the two domains. The first ABC transporter nucleotide-binding domain has no ATPase activity by itself.</text>
</comment>
<comment type="domain">
    <text evidence="1">The PDZ-binding motif mediates interactions with GOPC and with the SLC4A7, NHERF1/EBP50 complex.</text>
</comment>
<comment type="domain">
    <text evidence="1">The disordered R region mediates channel activation when it is phosphorylated, but not in the absence of phosphorylation.</text>
</comment>
<comment type="PTM">
    <text evidence="1">N-glycosylated.</text>
</comment>
<comment type="PTM">
    <text evidence="1">Phosphorylated; cAMP treatment promotes phosphorylation and activates the channel. Dephosphorylation decreases the ATPase activity (in vitro). Phosphorylation at PKA sites activates the channel. Phosphorylation at PKC sites enhances the response to phosphorylation by PKA. Phosphorylated by AMPK; this inhibits channel activity.</text>
</comment>
<comment type="PTM">
    <text evidence="1">Ubiquitinated, leading to its degradation in the lysosome. Deubiquitination by USP10 in early endosomes enhances its endocytic recycling to the cell membrane. Ubiquitinated by RNF185 during ER stress. Ubiquitinated by MARCHF2 (By similarity).</text>
</comment>
<comment type="similarity">
    <text evidence="8">Belongs to the ABC transporter superfamily. ABCC family. CFTR transporter (TC 3.A.1.202) subfamily.</text>
</comment>
<accession>Q9TSP5</accession>